<organismHost>
    <name type="scientific">Acheta domesticus</name>
    <name type="common">House cricket</name>
    <dbReference type="NCBI Taxonomy" id="6997"/>
</organismHost>
<organismHost>
    <name type="scientific">Chilo suppressalis</name>
    <name type="common">Asiatic rice borer moth</name>
    <dbReference type="NCBI Taxonomy" id="168631"/>
</organismHost>
<organismHost>
    <name type="scientific">Gryllus bimaculatus</name>
    <name type="common">Two-spotted cricket</name>
    <dbReference type="NCBI Taxonomy" id="6999"/>
</organismHost>
<organismHost>
    <name type="scientific">Gryllus campestris</name>
    <dbReference type="NCBI Taxonomy" id="58607"/>
</organismHost>
<organismHost>
    <name type="scientific">Spodoptera frugiperda</name>
    <name type="common">Fall armyworm</name>
    <dbReference type="NCBI Taxonomy" id="7108"/>
</organismHost>
<gene>
    <name type="ORF">IIV6-438L</name>
</gene>
<evidence type="ECO:0000250" key="1"/>
<evidence type="ECO:0000255" key="2"/>
<evidence type="ECO:0000305" key="3"/>
<name>438L_IIV6</name>
<feature type="chain" id="PRO_0000376921" description="Probable deoxyuridine 5'-triphosphate nucleotidohydrolase">
    <location>
        <begin position="1"/>
        <end position="296"/>
    </location>
</feature>
<feature type="coiled-coil region" evidence="2">
    <location>
        <begin position="66"/>
        <end position="102"/>
    </location>
</feature>
<dbReference type="EC" id="3.6.1.23"/>
<dbReference type="EMBL" id="AF303741">
    <property type="protein sequence ID" value="AAK82298.1"/>
    <property type="molecule type" value="Genomic_DNA"/>
</dbReference>
<dbReference type="RefSeq" id="NP_149901.1">
    <property type="nucleotide sequence ID" value="NC_003038.1"/>
</dbReference>
<dbReference type="SMR" id="Q91F87"/>
<dbReference type="KEGG" id="vg:1733373"/>
<dbReference type="OrthoDB" id="12539at10239"/>
<dbReference type="UniPathway" id="UPA00610">
    <property type="reaction ID" value="UER00666"/>
</dbReference>
<dbReference type="Proteomes" id="UP000001359">
    <property type="component" value="Genome"/>
</dbReference>
<dbReference type="GO" id="GO:0004170">
    <property type="term" value="F:dUTP diphosphatase activity"/>
    <property type="evidence" value="ECO:0007669"/>
    <property type="project" value="UniProtKB-EC"/>
</dbReference>
<dbReference type="GO" id="GO:0000287">
    <property type="term" value="F:magnesium ion binding"/>
    <property type="evidence" value="ECO:0007669"/>
    <property type="project" value="InterPro"/>
</dbReference>
<dbReference type="GO" id="GO:0006226">
    <property type="term" value="P:dUMP biosynthetic process"/>
    <property type="evidence" value="ECO:0007669"/>
    <property type="project" value="UniProtKB-UniPathway"/>
</dbReference>
<dbReference type="GO" id="GO:0046081">
    <property type="term" value="P:dUTP catabolic process"/>
    <property type="evidence" value="ECO:0007669"/>
    <property type="project" value="InterPro"/>
</dbReference>
<dbReference type="CDD" id="cd07557">
    <property type="entry name" value="trimeric_dUTPase"/>
    <property type="match status" value="1"/>
</dbReference>
<dbReference type="Gene3D" id="2.70.40.10">
    <property type="match status" value="1"/>
</dbReference>
<dbReference type="InterPro" id="IPR008181">
    <property type="entry name" value="dUTPase"/>
</dbReference>
<dbReference type="InterPro" id="IPR029054">
    <property type="entry name" value="dUTPase-like"/>
</dbReference>
<dbReference type="InterPro" id="IPR036157">
    <property type="entry name" value="dUTPase-like_sf"/>
</dbReference>
<dbReference type="InterPro" id="IPR033704">
    <property type="entry name" value="dUTPase_trimeric"/>
</dbReference>
<dbReference type="NCBIfam" id="TIGR00576">
    <property type="entry name" value="dut"/>
    <property type="match status" value="1"/>
</dbReference>
<dbReference type="PANTHER" id="PTHR11241">
    <property type="entry name" value="DEOXYURIDINE 5'-TRIPHOSPHATE NUCLEOTIDOHYDROLASE"/>
    <property type="match status" value="1"/>
</dbReference>
<dbReference type="PANTHER" id="PTHR11241:SF0">
    <property type="entry name" value="DEOXYURIDINE 5'-TRIPHOSPHATE NUCLEOTIDOHYDROLASE"/>
    <property type="match status" value="1"/>
</dbReference>
<dbReference type="Pfam" id="PF00692">
    <property type="entry name" value="dUTPase"/>
    <property type="match status" value="1"/>
</dbReference>
<dbReference type="SUPFAM" id="SSF47162">
    <property type="entry name" value="Apolipoprotein"/>
    <property type="match status" value="1"/>
</dbReference>
<dbReference type="SUPFAM" id="SSF51283">
    <property type="entry name" value="dUTPase-like"/>
    <property type="match status" value="1"/>
</dbReference>
<proteinExistence type="inferred from homology"/>
<organism>
    <name type="scientific">Invertebrate iridescent virus 6</name>
    <name type="common">IIV-6</name>
    <name type="synonym">Chilo iridescent virus</name>
    <dbReference type="NCBI Taxonomy" id="176652"/>
    <lineage>
        <taxon>Viruses</taxon>
        <taxon>Varidnaviria</taxon>
        <taxon>Bamfordvirae</taxon>
        <taxon>Nucleocytoviricota</taxon>
        <taxon>Megaviricetes</taxon>
        <taxon>Pimascovirales</taxon>
        <taxon>Iridoviridae</taxon>
        <taxon>Betairidovirinae</taxon>
        <taxon>Iridovirus</taxon>
    </lineage>
</organism>
<reference key="1">
    <citation type="journal article" date="2001" name="Virology">
        <title>Analysis of the first complete DNA sequence of an invertebrate iridovirus: coding strategy of the genome of Chilo iridescent virus.</title>
        <authorList>
            <person name="Jakob N.J."/>
            <person name="Mueller K."/>
            <person name="Bahr U."/>
            <person name="Darai G."/>
        </authorList>
    </citation>
    <scope>NUCLEOTIDE SEQUENCE [LARGE SCALE GENOMIC DNA]</scope>
</reference>
<reference key="2">
    <citation type="journal article" date="2007" name="Virol. J.">
        <title>Comparative genomic analysis of the family Iridoviridae: re-annotating and defining the core set of iridovirus genes.</title>
        <authorList>
            <person name="Eaton H.E."/>
            <person name="Metcalf J."/>
            <person name="Penny E."/>
            <person name="Tcherepanov V."/>
            <person name="Upton C."/>
            <person name="Brunetti C.R."/>
        </authorList>
    </citation>
    <scope>GENOME REANNOTATION</scope>
</reference>
<keyword id="KW-0175">Coiled coil</keyword>
<keyword id="KW-0378">Hydrolase</keyword>
<keyword id="KW-0546">Nucleotide metabolism</keyword>
<keyword id="KW-1185">Reference proteome</keyword>
<sequence>MDKKPTIAILKNEIDKLKSSFDTEKDEKDTKINHILSVVEGLSKSLSLYIEDNDKETTNEEVNIDEIDKNIVKNLEDKVNCLEQDVQYLKNELKKKDADWQQKLDLIVHQFTKQYDSLKSSLLISQKETSVFQSVQNNSNLPNNSNLPIETPILQIKFAALTEYAQKPKRGSEFSAGIDLRSAYEYLVPANGNKLIKTDWKIQYPDGYFGKICSRSGLSLNHNLEVGAGIVDADYREGVSVVLNNLSPRDFHVAPGDRIAQLVCTPYITPEIVFCKPSDIPDTVRGKNGFGSTGIN</sequence>
<comment type="function">
    <text evidence="1">This enzyme is involved in nucleotide metabolism: it produces dUMP, the immediate precursor of thymidine nucleotides and it decreases the intracellular concentration of dUTP so that uracil cannot be incorporated into DNA.</text>
</comment>
<comment type="catalytic activity">
    <reaction>
        <text>dUTP + H2O = dUMP + diphosphate + H(+)</text>
        <dbReference type="Rhea" id="RHEA:10248"/>
        <dbReference type="ChEBI" id="CHEBI:15377"/>
        <dbReference type="ChEBI" id="CHEBI:15378"/>
        <dbReference type="ChEBI" id="CHEBI:33019"/>
        <dbReference type="ChEBI" id="CHEBI:61555"/>
        <dbReference type="ChEBI" id="CHEBI:246422"/>
        <dbReference type="EC" id="3.6.1.23"/>
    </reaction>
</comment>
<comment type="pathway">
    <text>Pyrimidine metabolism; dUMP biosynthesis; dUMP from dCTP (dUTP route): step 2/2.</text>
</comment>
<comment type="similarity">
    <text evidence="3">Belongs to the dUTPase family.</text>
</comment>
<accession>Q91F87</accession>
<protein>
    <recommendedName>
        <fullName>Probable deoxyuridine 5'-triphosphate nucleotidohydrolase</fullName>
        <shortName>dUTPase</shortName>
        <ecNumber>3.6.1.23</ecNumber>
    </recommendedName>
    <alternativeName>
        <fullName>dUTP pyrophosphatase</fullName>
    </alternativeName>
</protein>